<evidence type="ECO:0000255" key="1">
    <source>
        <dbReference type="HAMAP-Rule" id="MF_00160"/>
    </source>
</evidence>
<organism>
    <name type="scientific">Buchnera aphidicola subsp. Acyrthosiphon pisum (strain APS)</name>
    <name type="common">Acyrthosiphon pisum symbiotic bacterium</name>
    <dbReference type="NCBI Taxonomy" id="107806"/>
    <lineage>
        <taxon>Bacteria</taxon>
        <taxon>Pseudomonadati</taxon>
        <taxon>Pseudomonadota</taxon>
        <taxon>Gammaproteobacteria</taxon>
        <taxon>Enterobacterales</taxon>
        <taxon>Erwiniaceae</taxon>
        <taxon>Buchnera</taxon>
    </lineage>
</organism>
<reference key="1">
    <citation type="journal article" date="2000" name="Nature">
        <title>Genome sequence of the endocellular bacterial symbiont of aphids Buchnera sp. APS.</title>
        <authorList>
            <person name="Shigenobu S."/>
            <person name="Watanabe H."/>
            <person name="Hattori M."/>
            <person name="Sakaki Y."/>
            <person name="Ishikawa H."/>
        </authorList>
    </citation>
    <scope>NUCLEOTIDE SEQUENCE [LARGE SCALE GENOMIC DNA]</scope>
    <source>
        <strain>APS</strain>
    </source>
</reference>
<dbReference type="EC" id="2.6.1.52" evidence="1"/>
<dbReference type="EMBL" id="BA000003">
    <property type="protein sequence ID" value="BAB13020.1"/>
    <property type="molecule type" value="Genomic_DNA"/>
</dbReference>
<dbReference type="RefSeq" id="NP_240134.1">
    <property type="nucleotide sequence ID" value="NC_002528.1"/>
</dbReference>
<dbReference type="RefSeq" id="WP_009874266.1">
    <property type="nucleotide sequence ID" value="NC_002528.1"/>
</dbReference>
<dbReference type="SMR" id="P57397"/>
<dbReference type="STRING" id="563178.BUAP5A_305"/>
<dbReference type="EnsemblBacteria" id="BAB13020">
    <property type="protein sequence ID" value="BAB13020"/>
    <property type="gene ID" value="BAB13020"/>
</dbReference>
<dbReference type="KEGG" id="buc:BU312"/>
<dbReference type="PATRIC" id="fig|107806.10.peg.324"/>
<dbReference type="eggNOG" id="COG1932">
    <property type="taxonomic scope" value="Bacteria"/>
</dbReference>
<dbReference type="HOGENOM" id="CLU_034866_0_2_6"/>
<dbReference type="UniPathway" id="UPA00135">
    <property type="reaction ID" value="UER00197"/>
</dbReference>
<dbReference type="UniPathway" id="UPA00244">
    <property type="reaction ID" value="UER00311"/>
</dbReference>
<dbReference type="Proteomes" id="UP000001806">
    <property type="component" value="Chromosome"/>
</dbReference>
<dbReference type="GO" id="GO:0005737">
    <property type="term" value="C:cytoplasm"/>
    <property type="evidence" value="ECO:0007669"/>
    <property type="project" value="UniProtKB-SubCell"/>
</dbReference>
<dbReference type="GO" id="GO:0004648">
    <property type="term" value="F:O-phospho-L-serine:2-oxoglutarate aminotransferase activity"/>
    <property type="evidence" value="ECO:0007669"/>
    <property type="project" value="UniProtKB-UniRule"/>
</dbReference>
<dbReference type="GO" id="GO:0030170">
    <property type="term" value="F:pyridoxal phosphate binding"/>
    <property type="evidence" value="ECO:0007669"/>
    <property type="project" value="UniProtKB-UniRule"/>
</dbReference>
<dbReference type="GO" id="GO:0006564">
    <property type="term" value="P:L-serine biosynthetic process"/>
    <property type="evidence" value="ECO:0007669"/>
    <property type="project" value="UniProtKB-UniRule"/>
</dbReference>
<dbReference type="GO" id="GO:0008615">
    <property type="term" value="P:pyridoxine biosynthetic process"/>
    <property type="evidence" value="ECO:0007669"/>
    <property type="project" value="UniProtKB-UniRule"/>
</dbReference>
<dbReference type="FunFam" id="3.40.640.10:FF:000010">
    <property type="entry name" value="Phosphoserine aminotransferase"/>
    <property type="match status" value="1"/>
</dbReference>
<dbReference type="FunFam" id="3.90.1150.10:FF:000006">
    <property type="entry name" value="Phosphoserine aminotransferase"/>
    <property type="match status" value="1"/>
</dbReference>
<dbReference type="Gene3D" id="3.90.1150.10">
    <property type="entry name" value="Aspartate Aminotransferase, domain 1"/>
    <property type="match status" value="1"/>
</dbReference>
<dbReference type="Gene3D" id="3.40.640.10">
    <property type="entry name" value="Type I PLP-dependent aspartate aminotransferase-like (Major domain)"/>
    <property type="match status" value="1"/>
</dbReference>
<dbReference type="HAMAP" id="MF_00160">
    <property type="entry name" value="SerC_aminotrans_5"/>
    <property type="match status" value="1"/>
</dbReference>
<dbReference type="InterPro" id="IPR000192">
    <property type="entry name" value="Aminotrans_V_dom"/>
</dbReference>
<dbReference type="InterPro" id="IPR020578">
    <property type="entry name" value="Aminotrans_V_PyrdxlP_BS"/>
</dbReference>
<dbReference type="InterPro" id="IPR022278">
    <property type="entry name" value="Pser_aminoTfrase"/>
</dbReference>
<dbReference type="InterPro" id="IPR015424">
    <property type="entry name" value="PyrdxlP-dep_Trfase"/>
</dbReference>
<dbReference type="InterPro" id="IPR015421">
    <property type="entry name" value="PyrdxlP-dep_Trfase_major"/>
</dbReference>
<dbReference type="InterPro" id="IPR015422">
    <property type="entry name" value="PyrdxlP-dep_Trfase_small"/>
</dbReference>
<dbReference type="NCBIfam" id="NF003764">
    <property type="entry name" value="PRK05355.1"/>
    <property type="match status" value="1"/>
</dbReference>
<dbReference type="NCBIfam" id="TIGR01364">
    <property type="entry name" value="serC_1"/>
    <property type="match status" value="1"/>
</dbReference>
<dbReference type="PANTHER" id="PTHR43247">
    <property type="entry name" value="PHOSPHOSERINE AMINOTRANSFERASE"/>
    <property type="match status" value="1"/>
</dbReference>
<dbReference type="PANTHER" id="PTHR43247:SF1">
    <property type="entry name" value="PHOSPHOSERINE AMINOTRANSFERASE"/>
    <property type="match status" value="1"/>
</dbReference>
<dbReference type="Pfam" id="PF00266">
    <property type="entry name" value="Aminotran_5"/>
    <property type="match status" value="1"/>
</dbReference>
<dbReference type="PIRSF" id="PIRSF000525">
    <property type="entry name" value="SerC"/>
    <property type="match status" value="1"/>
</dbReference>
<dbReference type="SUPFAM" id="SSF53383">
    <property type="entry name" value="PLP-dependent transferases"/>
    <property type="match status" value="1"/>
</dbReference>
<dbReference type="PROSITE" id="PS00595">
    <property type="entry name" value="AA_TRANSFER_CLASS_5"/>
    <property type="match status" value="1"/>
</dbReference>
<proteinExistence type="inferred from homology"/>
<protein>
    <recommendedName>
        <fullName evidence="1">Phosphoserine aminotransferase</fullName>
        <ecNumber evidence="1">2.6.1.52</ecNumber>
    </recommendedName>
    <alternativeName>
        <fullName evidence="1">Phosphohydroxythreonine aminotransferase</fullName>
        <shortName evidence="1">PSAT</shortName>
    </alternativeName>
</protein>
<feature type="chain" id="PRO_0000150158" description="Phosphoserine aminotransferase">
    <location>
        <begin position="1"/>
        <end position="361"/>
    </location>
</feature>
<feature type="binding site" evidence="1">
    <location>
        <position position="42"/>
    </location>
    <ligand>
        <name>L-glutamate</name>
        <dbReference type="ChEBI" id="CHEBI:29985"/>
    </ligand>
</feature>
<feature type="binding site" evidence="1">
    <location>
        <begin position="76"/>
        <end position="77"/>
    </location>
    <ligand>
        <name>pyridoxal 5'-phosphate</name>
        <dbReference type="ChEBI" id="CHEBI:597326"/>
    </ligand>
</feature>
<feature type="binding site" evidence="1">
    <location>
        <position position="102"/>
    </location>
    <ligand>
        <name>pyridoxal 5'-phosphate</name>
        <dbReference type="ChEBI" id="CHEBI:597326"/>
    </ligand>
</feature>
<feature type="binding site" evidence="1">
    <location>
        <position position="153"/>
    </location>
    <ligand>
        <name>pyridoxal 5'-phosphate</name>
        <dbReference type="ChEBI" id="CHEBI:597326"/>
    </ligand>
</feature>
<feature type="binding site" evidence="1">
    <location>
        <position position="173"/>
    </location>
    <ligand>
        <name>pyridoxal 5'-phosphate</name>
        <dbReference type="ChEBI" id="CHEBI:597326"/>
    </ligand>
</feature>
<feature type="binding site" evidence="1">
    <location>
        <position position="196"/>
    </location>
    <ligand>
        <name>pyridoxal 5'-phosphate</name>
        <dbReference type="ChEBI" id="CHEBI:597326"/>
    </ligand>
</feature>
<feature type="binding site" evidence="1">
    <location>
        <begin position="238"/>
        <end position="239"/>
    </location>
    <ligand>
        <name>pyridoxal 5'-phosphate</name>
        <dbReference type="ChEBI" id="CHEBI:597326"/>
    </ligand>
</feature>
<feature type="modified residue" description="N6-(pyridoxal phosphate)lysine" evidence="1">
    <location>
        <position position="197"/>
    </location>
</feature>
<name>SERC_BUCAI</name>
<sequence length="361" mass="41310">MNLIYNFSAGPAMIPRDVLNQAKKELHNWKNLGSSIMEISHRSEEFIQMALEAEKDLRDLLKIPDSFKVLFCQGGARGQFSAIPMNLLNNLQTADYINSGYWSNSAFMEAKKYCTPRSIFIRETNGVKESLLPMHKWNINENSAYIHYCPNETIDGLSIYEEPVFENKIVVGDFSSFILSRSINIKNYDLIYAGAQKNIGPAGITIIIIRKNIIGYSSKMTPSILDYKKISDHHSMFNTPPTFAWYLSGLVFKWLKKQGGLKAIEKLNKKKSDLLYKKIDNSDFYINKINSKHRSQMNVVFHLVNPKLNYIFLKEASKTGLNYLRGHSIVGGMRASLYNAMPLEGVESLVKFMSYFEKRYG</sequence>
<accession>P57397</accession>
<comment type="function">
    <text evidence="1">Catalyzes the reversible conversion of 3-phosphohydroxypyruvate to phosphoserine and of 3-hydroxy-2-oxo-4-phosphonooxybutanoate to phosphohydroxythreonine.</text>
</comment>
<comment type="catalytic activity">
    <reaction evidence="1">
        <text>O-phospho-L-serine + 2-oxoglutarate = 3-phosphooxypyruvate + L-glutamate</text>
        <dbReference type="Rhea" id="RHEA:14329"/>
        <dbReference type="ChEBI" id="CHEBI:16810"/>
        <dbReference type="ChEBI" id="CHEBI:18110"/>
        <dbReference type="ChEBI" id="CHEBI:29985"/>
        <dbReference type="ChEBI" id="CHEBI:57524"/>
        <dbReference type="EC" id="2.6.1.52"/>
    </reaction>
</comment>
<comment type="catalytic activity">
    <reaction evidence="1">
        <text>4-(phosphooxy)-L-threonine + 2-oxoglutarate = (R)-3-hydroxy-2-oxo-4-phosphooxybutanoate + L-glutamate</text>
        <dbReference type="Rhea" id="RHEA:16573"/>
        <dbReference type="ChEBI" id="CHEBI:16810"/>
        <dbReference type="ChEBI" id="CHEBI:29985"/>
        <dbReference type="ChEBI" id="CHEBI:58452"/>
        <dbReference type="ChEBI" id="CHEBI:58538"/>
        <dbReference type="EC" id="2.6.1.52"/>
    </reaction>
</comment>
<comment type="cofactor">
    <cofactor evidence="1">
        <name>pyridoxal 5'-phosphate</name>
        <dbReference type="ChEBI" id="CHEBI:597326"/>
    </cofactor>
    <text evidence="1">Binds 1 pyridoxal phosphate per subunit.</text>
</comment>
<comment type="pathway">
    <text evidence="1">Amino-acid biosynthesis; L-serine biosynthesis; L-serine from 3-phospho-D-glycerate: step 2/3.</text>
</comment>
<comment type="pathway">
    <text evidence="1">Cofactor biosynthesis; pyridoxine 5'-phosphate biosynthesis; pyridoxine 5'-phosphate from D-erythrose 4-phosphate: step 3/5.</text>
</comment>
<comment type="subunit">
    <text evidence="1">Homodimer.</text>
</comment>
<comment type="subcellular location">
    <subcellularLocation>
        <location evidence="1">Cytoplasm</location>
    </subcellularLocation>
</comment>
<comment type="similarity">
    <text evidence="1">Belongs to the class-V pyridoxal-phosphate-dependent aminotransferase family. SerC subfamily.</text>
</comment>
<gene>
    <name evidence="1" type="primary">serC</name>
    <name type="ordered locus">BU312</name>
</gene>
<keyword id="KW-0028">Amino-acid biosynthesis</keyword>
<keyword id="KW-0032">Aminotransferase</keyword>
<keyword id="KW-0963">Cytoplasm</keyword>
<keyword id="KW-0663">Pyridoxal phosphate</keyword>
<keyword id="KW-0664">Pyridoxine biosynthesis</keyword>
<keyword id="KW-1185">Reference proteome</keyword>
<keyword id="KW-0718">Serine biosynthesis</keyword>
<keyword id="KW-0808">Transferase</keyword>